<keyword id="KW-1015">Disulfide bond</keyword>
<keyword id="KW-0960">Knottin</keyword>
<keyword id="KW-0964">Secreted</keyword>
<keyword id="KW-0800">Toxin</keyword>
<accession>P0CI17</accession>
<organism>
    <name type="scientific">Hastula hectica</name>
    <name type="common">Sea snail</name>
    <name type="synonym">Impages hectica</name>
    <dbReference type="NCBI Taxonomy" id="745793"/>
    <lineage>
        <taxon>Eukaryota</taxon>
        <taxon>Metazoa</taxon>
        <taxon>Spiralia</taxon>
        <taxon>Lophotrochozoa</taxon>
        <taxon>Mollusca</taxon>
        <taxon>Gastropoda</taxon>
        <taxon>Caenogastropoda</taxon>
        <taxon>Neogastropoda</taxon>
        <taxon>Conoidea</taxon>
        <taxon>Terebridae</taxon>
        <taxon>Hastula</taxon>
    </lineage>
</organism>
<protein>
    <recommendedName>
        <fullName>Augerpeptide hhe6.2</fullName>
    </recommendedName>
</protein>
<comment type="subcellular location">
    <subcellularLocation>
        <location evidence="1">Secreted</location>
    </subcellularLocation>
</comment>
<comment type="tissue specificity">
    <text>Expressed by the venom duct.</text>
</comment>
<comment type="domain">
    <text evidence="1">The presence of a 'disulfide through disulfide knot' structurally defines this protein as a knottin.</text>
</comment>
<comment type="domain">
    <text>The cysteine framework is VI/VII (C-C-CC-C-C).</text>
</comment>
<reference key="1">
    <citation type="journal article" date="2007" name="J. Exp. Zool. B Mol. Dev. Evol.">
        <title>Venomous auger snail Hastula (Impages) hectica (Linnaeus, 1758): molecular phylogeny, foregut anatomy and comparative toxinology.</title>
        <authorList>
            <person name="Imperial J.S."/>
            <person name="Kantor Y."/>
            <person name="Watkins M."/>
            <person name="Heralde F.M. III"/>
            <person name="Stevenson B."/>
            <person name="Chen P."/>
            <person name="Hansson K."/>
            <person name="Stenflo J."/>
            <person name="Ownby J.P."/>
            <person name="Bouchet P."/>
            <person name="Olivera B.M."/>
        </authorList>
    </citation>
    <scope>NUCLEOTIDE SEQUENCE [MRNA]</scope>
    <source>
        <tissue>Venom duct</tissue>
    </source>
</reference>
<dbReference type="GO" id="GO:0005576">
    <property type="term" value="C:extracellular region"/>
    <property type="evidence" value="ECO:0007669"/>
    <property type="project" value="UniProtKB-SubCell"/>
</dbReference>
<dbReference type="GO" id="GO:0090729">
    <property type="term" value="F:toxin activity"/>
    <property type="evidence" value="ECO:0007669"/>
    <property type="project" value="UniProtKB-KW"/>
</dbReference>
<evidence type="ECO:0000250" key="1"/>
<name>TE62_HASHE</name>
<feature type="peptide" id="PRO_0000402141" description="Augerpeptide hhe6.2">
    <location>
        <begin position="1"/>
        <end position="27"/>
    </location>
</feature>
<feature type="disulfide bond" evidence="1">
    <location>
        <begin position="4"/>
        <end position="13"/>
    </location>
</feature>
<feature type="disulfide bond" evidence="1">
    <location>
        <begin position="8"/>
        <end position="20"/>
    </location>
</feature>
<feature type="disulfide bond" evidence="1">
    <location>
        <begin position="12"/>
        <end position="27"/>
    </location>
</feature>
<sequence length="27" mass="2940">ALPCPYGCPLRCCHMTDGVCLRNKQGC</sequence>
<proteinExistence type="evidence at transcript level"/>